<evidence type="ECO:0000255" key="1">
    <source>
        <dbReference type="HAMAP-Rule" id="MF_01705"/>
    </source>
</evidence>
<evidence type="ECO:0000255" key="2">
    <source>
        <dbReference type="PROSITE-ProRule" id="PRU01213"/>
    </source>
</evidence>
<comment type="function">
    <text evidence="1">Part of the ABC transporter complex ModABC involved in molybdenum import. Responsible for energy coupling to the transport system.</text>
</comment>
<comment type="catalytic activity">
    <reaction evidence="1">
        <text>molybdate(out) + ATP + H2O = molybdate(in) + ADP + phosphate + H(+)</text>
        <dbReference type="Rhea" id="RHEA:22020"/>
        <dbReference type="ChEBI" id="CHEBI:15377"/>
        <dbReference type="ChEBI" id="CHEBI:15378"/>
        <dbReference type="ChEBI" id="CHEBI:30616"/>
        <dbReference type="ChEBI" id="CHEBI:36264"/>
        <dbReference type="ChEBI" id="CHEBI:43474"/>
        <dbReference type="ChEBI" id="CHEBI:456216"/>
        <dbReference type="EC" id="7.3.2.5"/>
    </reaction>
</comment>
<comment type="subunit">
    <text evidence="1">The complex is composed of two ATP-binding proteins (ModC), two transmembrane proteins (ModB) and a solute-binding protein (ModA).</text>
</comment>
<comment type="subcellular location">
    <subcellularLocation>
        <location evidence="1">Cell inner membrane</location>
        <topology evidence="1">Peripheral membrane protein</topology>
    </subcellularLocation>
</comment>
<comment type="similarity">
    <text evidence="1">Belongs to the ABC transporter superfamily. Molybdate importer (TC 3.A.1.8) family.</text>
</comment>
<sequence>MSGLTVSIRGRNGAFAIEAGFAAEGGVTALFGHSGAGKTTLLKMIAGTLRPENGRIAVGDFTLFDAQKGINLPPEKRCIGYVFQDARLFAYMSVKRNLTYARWAGHRQATRSFDEVVALLGIGHLLDRRPSTLSGGERQRVAIGRALLSDPALLLLDEPLSSLDHARRQEILPFIERLRDESHVPIVYVSHEIDEVARLADQIVLLSAGRVTASGAAADIFPLIDAESEGGGVLLEGIVSAYDERYKLAEIDLGGASFQLSDAGLKQTMHVRLRVRARDVSIARKIPEAISIRNLLPVTVTGIERGEGPNAHVFLDFRGRRLGARLTRRSVDDLGLSVGDQVVALVKAVSVDRAAIREK</sequence>
<gene>
    <name evidence="1" type="primary">modC</name>
    <name type="ordered locus">BRA0090</name>
    <name type="ordered locus">BS1330_II0090</name>
</gene>
<proteinExistence type="inferred from homology"/>
<accession>Q8FXI7</accession>
<accession>G0KET6</accession>
<feature type="chain" id="PRO_0000092536" description="Molybdenum import ATP-binding protein ModC">
    <location>
        <begin position="1"/>
        <end position="359"/>
    </location>
</feature>
<feature type="domain" description="ABC transporter" evidence="1">
    <location>
        <begin position="1"/>
        <end position="233"/>
    </location>
</feature>
<feature type="domain" description="Mop" evidence="2">
    <location>
        <begin position="289"/>
        <end position="355"/>
    </location>
</feature>
<feature type="binding site" evidence="1">
    <location>
        <begin position="32"/>
        <end position="39"/>
    </location>
    <ligand>
        <name>ATP</name>
        <dbReference type="ChEBI" id="CHEBI:30616"/>
    </ligand>
</feature>
<name>MODC_BRUSU</name>
<protein>
    <recommendedName>
        <fullName evidence="1">Molybdenum import ATP-binding protein ModC</fullName>
        <ecNumber evidence="1">7.3.2.5</ecNumber>
    </recommendedName>
</protein>
<organism>
    <name type="scientific">Brucella suis biovar 1 (strain 1330)</name>
    <dbReference type="NCBI Taxonomy" id="204722"/>
    <lineage>
        <taxon>Bacteria</taxon>
        <taxon>Pseudomonadati</taxon>
        <taxon>Pseudomonadota</taxon>
        <taxon>Alphaproteobacteria</taxon>
        <taxon>Hyphomicrobiales</taxon>
        <taxon>Brucellaceae</taxon>
        <taxon>Brucella/Ochrobactrum group</taxon>
        <taxon>Brucella</taxon>
    </lineage>
</organism>
<keyword id="KW-0067">ATP-binding</keyword>
<keyword id="KW-0997">Cell inner membrane</keyword>
<keyword id="KW-1003">Cell membrane</keyword>
<keyword id="KW-0472">Membrane</keyword>
<keyword id="KW-0500">Molybdenum</keyword>
<keyword id="KW-0547">Nucleotide-binding</keyword>
<keyword id="KW-1278">Translocase</keyword>
<keyword id="KW-0813">Transport</keyword>
<dbReference type="EC" id="7.3.2.5" evidence="1"/>
<dbReference type="EMBL" id="AE014292">
    <property type="protein sequence ID" value="AAN33300.1"/>
    <property type="molecule type" value="Genomic_DNA"/>
</dbReference>
<dbReference type="EMBL" id="CP002998">
    <property type="protein sequence ID" value="AEM19580.1"/>
    <property type="molecule type" value="Genomic_DNA"/>
</dbReference>
<dbReference type="RefSeq" id="WP_004692595.1">
    <property type="nucleotide sequence ID" value="NZ_KN046805.1"/>
</dbReference>
<dbReference type="SMR" id="Q8FXI7"/>
<dbReference type="GeneID" id="55591826"/>
<dbReference type="KEGG" id="bms:BRA0090"/>
<dbReference type="KEGG" id="bsi:BS1330_II0090"/>
<dbReference type="PATRIC" id="fig|204722.21.peg.1870"/>
<dbReference type="HOGENOM" id="CLU_000604_1_1_5"/>
<dbReference type="PhylomeDB" id="Q8FXI7"/>
<dbReference type="Proteomes" id="UP000007104">
    <property type="component" value="Chromosome II"/>
</dbReference>
<dbReference type="GO" id="GO:0005886">
    <property type="term" value="C:plasma membrane"/>
    <property type="evidence" value="ECO:0007669"/>
    <property type="project" value="UniProtKB-SubCell"/>
</dbReference>
<dbReference type="GO" id="GO:0015412">
    <property type="term" value="F:ABC-type molybdate transporter activity"/>
    <property type="evidence" value="ECO:0007669"/>
    <property type="project" value="UniProtKB-EC"/>
</dbReference>
<dbReference type="GO" id="GO:0005524">
    <property type="term" value="F:ATP binding"/>
    <property type="evidence" value="ECO:0007669"/>
    <property type="project" value="UniProtKB-KW"/>
</dbReference>
<dbReference type="GO" id="GO:0016887">
    <property type="term" value="F:ATP hydrolysis activity"/>
    <property type="evidence" value="ECO:0007669"/>
    <property type="project" value="InterPro"/>
</dbReference>
<dbReference type="Gene3D" id="2.40.50.100">
    <property type="match status" value="1"/>
</dbReference>
<dbReference type="Gene3D" id="3.40.50.300">
    <property type="entry name" value="P-loop containing nucleotide triphosphate hydrolases"/>
    <property type="match status" value="1"/>
</dbReference>
<dbReference type="InterPro" id="IPR003593">
    <property type="entry name" value="AAA+_ATPase"/>
</dbReference>
<dbReference type="InterPro" id="IPR003439">
    <property type="entry name" value="ABC_transporter-like_ATP-bd"/>
</dbReference>
<dbReference type="InterPro" id="IPR017871">
    <property type="entry name" value="ABC_transporter-like_CS"/>
</dbReference>
<dbReference type="InterPro" id="IPR008995">
    <property type="entry name" value="Mo/tungstate-bd_C_term_dom"/>
</dbReference>
<dbReference type="InterPro" id="IPR011868">
    <property type="entry name" value="ModC_ABC_ATP-bd"/>
</dbReference>
<dbReference type="InterPro" id="IPR050334">
    <property type="entry name" value="Molybdenum_import_ModC"/>
</dbReference>
<dbReference type="InterPro" id="IPR004606">
    <property type="entry name" value="Mop_domain"/>
</dbReference>
<dbReference type="InterPro" id="IPR027417">
    <property type="entry name" value="P-loop_NTPase"/>
</dbReference>
<dbReference type="InterPro" id="IPR005116">
    <property type="entry name" value="Transp-assoc_OB_typ1"/>
</dbReference>
<dbReference type="NCBIfam" id="TIGR02142">
    <property type="entry name" value="modC_ABC"/>
    <property type="match status" value="1"/>
</dbReference>
<dbReference type="PANTHER" id="PTHR43514">
    <property type="entry name" value="ABC TRANSPORTER I FAMILY MEMBER 10"/>
    <property type="match status" value="1"/>
</dbReference>
<dbReference type="PANTHER" id="PTHR43514:SF4">
    <property type="entry name" value="ABC TRANSPORTER I FAMILY MEMBER 10"/>
    <property type="match status" value="1"/>
</dbReference>
<dbReference type="Pfam" id="PF00005">
    <property type="entry name" value="ABC_tran"/>
    <property type="match status" value="1"/>
</dbReference>
<dbReference type="Pfam" id="PF03459">
    <property type="entry name" value="TOBE"/>
    <property type="match status" value="1"/>
</dbReference>
<dbReference type="SMART" id="SM00382">
    <property type="entry name" value="AAA"/>
    <property type="match status" value="1"/>
</dbReference>
<dbReference type="SUPFAM" id="SSF50331">
    <property type="entry name" value="MOP-like"/>
    <property type="match status" value="1"/>
</dbReference>
<dbReference type="SUPFAM" id="SSF52540">
    <property type="entry name" value="P-loop containing nucleoside triphosphate hydrolases"/>
    <property type="match status" value="1"/>
</dbReference>
<dbReference type="PROSITE" id="PS00211">
    <property type="entry name" value="ABC_TRANSPORTER_1"/>
    <property type="match status" value="1"/>
</dbReference>
<dbReference type="PROSITE" id="PS50893">
    <property type="entry name" value="ABC_TRANSPORTER_2"/>
    <property type="match status" value="1"/>
</dbReference>
<dbReference type="PROSITE" id="PS51241">
    <property type="entry name" value="MODC"/>
    <property type="match status" value="1"/>
</dbReference>
<dbReference type="PROSITE" id="PS51866">
    <property type="entry name" value="MOP"/>
    <property type="match status" value="1"/>
</dbReference>
<reference key="1">
    <citation type="journal article" date="2002" name="Proc. Natl. Acad. Sci. U.S.A.">
        <title>The Brucella suis genome reveals fundamental similarities between animal and plant pathogens and symbionts.</title>
        <authorList>
            <person name="Paulsen I.T."/>
            <person name="Seshadri R."/>
            <person name="Nelson K.E."/>
            <person name="Eisen J.A."/>
            <person name="Heidelberg J.F."/>
            <person name="Read T.D."/>
            <person name="Dodson R.J."/>
            <person name="Umayam L.A."/>
            <person name="Brinkac L.M."/>
            <person name="Beanan M.J."/>
            <person name="Daugherty S.C."/>
            <person name="DeBoy R.T."/>
            <person name="Durkin A.S."/>
            <person name="Kolonay J.F."/>
            <person name="Madupu R."/>
            <person name="Nelson W.C."/>
            <person name="Ayodeji B."/>
            <person name="Kraul M."/>
            <person name="Shetty J."/>
            <person name="Malek J.A."/>
            <person name="Van Aken S.E."/>
            <person name="Riedmuller S."/>
            <person name="Tettelin H."/>
            <person name="Gill S.R."/>
            <person name="White O."/>
            <person name="Salzberg S.L."/>
            <person name="Hoover D.L."/>
            <person name="Lindler L.E."/>
            <person name="Halling S.M."/>
            <person name="Boyle S.M."/>
            <person name="Fraser C.M."/>
        </authorList>
    </citation>
    <scope>NUCLEOTIDE SEQUENCE [LARGE SCALE GENOMIC DNA]</scope>
    <source>
        <strain>1330</strain>
    </source>
</reference>
<reference key="2">
    <citation type="journal article" date="2011" name="J. Bacteriol.">
        <title>Revised genome sequence of Brucella suis 1330.</title>
        <authorList>
            <person name="Tae H."/>
            <person name="Shallom S."/>
            <person name="Settlage R."/>
            <person name="Preston D."/>
            <person name="Adams L.G."/>
            <person name="Garner H.R."/>
        </authorList>
    </citation>
    <scope>NUCLEOTIDE SEQUENCE [LARGE SCALE GENOMIC DNA]</scope>
    <source>
        <strain>1330</strain>
    </source>
</reference>